<accession>P45626</accession>
<comment type="function">
    <text evidence="5">Catalyzes the ATP-dependent biosynthesis of glutamine from glutamate and ammonia.</text>
</comment>
<comment type="catalytic activity">
    <reaction evidence="3">
        <text>L-glutamate + NH4(+) + ATP = L-glutamine + ADP + phosphate + H(+)</text>
        <dbReference type="Rhea" id="RHEA:16169"/>
        <dbReference type="ChEBI" id="CHEBI:15378"/>
        <dbReference type="ChEBI" id="CHEBI:28938"/>
        <dbReference type="ChEBI" id="CHEBI:29985"/>
        <dbReference type="ChEBI" id="CHEBI:30616"/>
        <dbReference type="ChEBI" id="CHEBI:43474"/>
        <dbReference type="ChEBI" id="CHEBI:58359"/>
        <dbReference type="ChEBI" id="CHEBI:456216"/>
        <dbReference type="EC" id="6.3.1.2"/>
    </reaction>
</comment>
<comment type="cofactor">
    <cofactor evidence="3">
        <name>Mg(2+)</name>
        <dbReference type="ChEBI" id="CHEBI:18420"/>
    </cofactor>
</comment>
<comment type="subunit">
    <text evidence="5">Homooctamer and homotetramer.</text>
</comment>
<comment type="subcellular location">
    <subcellularLocation>
        <location evidence="3">Cytoplasm</location>
    </subcellularLocation>
</comment>
<comment type="similarity">
    <text evidence="9">Belongs to the glutamine synthetase family.</text>
</comment>
<reference key="1">
    <citation type="journal article" date="1989" name="J. Mol. Evol.">
        <title>Glutamine synthetase II in Rhizobium: reexamination of the proposed horizontal transfer of DNA from eukaryotes to prokaryotes.</title>
        <authorList>
            <person name="Shatters R.G."/>
            <person name="Kahn M.L."/>
        </authorList>
    </citation>
    <scope>NUCLEOTIDE SEQUENCE [GENOMIC DNA]</scope>
</reference>
<gene>
    <name evidence="8" type="primary">glnII</name>
</gene>
<geneLocation type="plasmid">
    <name>pSymB</name>
    <name>megaplasmid 2</name>
</geneLocation>
<evidence type="ECO:0000250" key="1">
    <source>
        <dbReference type="UniProtKB" id="P0A1P6"/>
    </source>
</evidence>
<evidence type="ECO:0000250" key="2">
    <source>
        <dbReference type="UniProtKB" id="P12425"/>
    </source>
</evidence>
<evidence type="ECO:0000250" key="3">
    <source>
        <dbReference type="UniProtKB" id="P16580"/>
    </source>
</evidence>
<evidence type="ECO:0000250" key="4">
    <source>
        <dbReference type="UniProtKB" id="P9WN39"/>
    </source>
</evidence>
<evidence type="ECO:0000250" key="5">
    <source>
        <dbReference type="UniProtKB" id="Q02154"/>
    </source>
</evidence>
<evidence type="ECO:0000255" key="6">
    <source>
        <dbReference type="PROSITE-ProRule" id="PRU01330"/>
    </source>
</evidence>
<evidence type="ECO:0000255" key="7">
    <source>
        <dbReference type="PROSITE-ProRule" id="PRU01331"/>
    </source>
</evidence>
<evidence type="ECO:0000303" key="8">
    <source>
    </source>
</evidence>
<evidence type="ECO:0000305" key="9"/>
<organism>
    <name type="scientific">Rhizobium meliloti</name>
    <name type="common">Ensifer meliloti</name>
    <name type="synonym">Sinorhizobium meliloti</name>
    <dbReference type="NCBI Taxonomy" id="382"/>
    <lineage>
        <taxon>Bacteria</taxon>
        <taxon>Pseudomonadati</taxon>
        <taxon>Pseudomonadota</taxon>
        <taxon>Alphaproteobacteria</taxon>
        <taxon>Hyphomicrobiales</taxon>
        <taxon>Rhizobiaceae</taxon>
        <taxon>Sinorhizobium/Ensifer group</taxon>
        <taxon>Sinorhizobium</taxon>
    </lineage>
</organism>
<sequence>MTKYKLEYIWLDATRPYQTLRGKTQIKEFDAFPTLEQLPLWGFDGSSTLQAEGRTSDCVLKPVTVYPDPVRTNGALVMCEVMMPDAETPHASNTRATVLDDEGAWFGFEQEYFFYKNGRPLGFPEQGYPAPQGPYYTGVGYKNVGDVARQIVEEHLDICLAAGINHEGINAEVAKGQWEFQIFGKGSKKAADEVCVARYLLVRLTEKYGIDVEFHCKPLGDTDWNGSGMHANFSTAYLREVGGQDYFEALMAAFEKNLHDHINVYGPDNHLRLTGKHETAPWDKFSYGVADRGASIRVPHSFVNNAYPGYLEDRRANSQGDPYQMLLSS</sequence>
<keyword id="KW-0067">ATP-binding</keyword>
<keyword id="KW-0963">Cytoplasm</keyword>
<keyword id="KW-0436">Ligase</keyword>
<keyword id="KW-0460">Magnesium</keyword>
<keyword id="KW-0479">Metal-binding</keyword>
<keyword id="KW-0535">Nitrogen fixation</keyword>
<keyword id="KW-0547">Nucleotide-binding</keyword>
<keyword id="KW-0614">Plasmid</keyword>
<protein>
    <recommendedName>
        <fullName evidence="8">Glutamine synthetase</fullName>
        <shortName evidence="8">GS</shortName>
        <ecNumber evidence="3">6.3.1.2</ecNumber>
    </recommendedName>
    <alternativeName>
        <fullName evidence="9">Glutamate--ammonia ligase</fullName>
    </alternativeName>
    <alternativeName>
        <fullName evidence="8">Glutamine synthetase II</fullName>
        <shortName evidence="8">GSII</shortName>
    </alternativeName>
</protein>
<proteinExistence type="inferred from homology"/>
<feature type="chain" id="PRO_0000153226" description="Glutamine synthetase">
    <location>
        <begin position="1"/>
        <end position="329"/>
    </location>
</feature>
<feature type="domain" description="GS beta-grasp" evidence="6">
    <location>
        <begin position="4"/>
        <end position="86"/>
    </location>
</feature>
<feature type="domain" description="GS catalytic" evidence="7">
    <location>
        <begin position="89"/>
        <end position="329"/>
    </location>
</feature>
<feature type="binding site" evidence="2">
    <location>
        <position position="109"/>
    </location>
    <ligand>
        <name>Mg(2+)</name>
        <dbReference type="ChEBI" id="CHEBI:18420"/>
    </ligand>
</feature>
<feature type="binding site" evidence="2">
    <location>
        <position position="111"/>
    </location>
    <ligand>
        <name>Mg(2+)</name>
        <dbReference type="ChEBI" id="CHEBI:18420"/>
    </ligand>
</feature>
<feature type="binding site" evidence="4">
    <location>
        <position position="167"/>
    </location>
    <ligand>
        <name>ATP</name>
        <dbReference type="ChEBI" id="CHEBI:30616"/>
    </ligand>
</feature>
<feature type="binding site" evidence="2">
    <location>
        <position position="172"/>
    </location>
    <ligand>
        <name>Mg(2+)</name>
        <dbReference type="ChEBI" id="CHEBI:18420"/>
    </ligand>
</feature>
<feature type="binding site" evidence="2">
    <location>
        <position position="179"/>
    </location>
    <ligand>
        <name>Mg(2+)</name>
        <dbReference type="ChEBI" id="CHEBI:18420"/>
    </ligand>
</feature>
<feature type="binding site" evidence="1">
    <location>
        <position position="278"/>
    </location>
    <ligand>
        <name>L-glutamate</name>
        <dbReference type="ChEBI" id="CHEBI:29985"/>
    </ligand>
</feature>
<name>GLNA2_RHIML</name>
<dbReference type="EC" id="6.3.1.2" evidence="3"/>
<dbReference type="EMBL" id="X17523">
    <property type="protein sequence ID" value="CAB37407.1"/>
    <property type="molecule type" value="Genomic_DNA"/>
</dbReference>
<dbReference type="SMR" id="P45626"/>
<dbReference type="GO" id="GO:0005737">
    <property type="term" value="C:cytoplasm"/>
    <property type="evidence" value="ECO:0007669"/>
    <property type="project" value="UniProtKB-SubCell"/>
</dbReference>
<dbReference type="GO" id="GO:0005524">
    <property type="term" value="F:ATP binding"/>
    <property type="evidence" value="ECO:0007669"/>
    <property type="project" value="UniProtKB-KW"/>
</dbReference>
<dbReference type="GO" id="GO:0004356">
    <property type="term" value="F:glutamine synthetase activity"/>
    <property type="evidence" value="ECO:0007669"/>
    <property type="project" value="UniProtKB-EC"/>
</dbReference>
<dbReference type="GO" id="GO:0046872">
    <property type="term" value="F:metal ion binding"/>
    <property type="evidence" value="ECO:0007669"/>
    <property type="project" value="UniProtKB-KW"/>
</dbReference>
<dbReference type="GO" id="GO:0006542">
    <property type="term" value="P:glutamine biosynthetic process"/>
    <property type="evidence" value="ECO:0007669"/>
    <property type="project" value="InterPro"/>
</dbReference>
<dbReference type="GO" id="GO:0009399">
    <property type="term" value="P:nitrogen fixation"/>
    <property type="evidence" value="ECO:0007669"/>
    <property type="project" value="UniProtKB-KW"/>
</dbReference>
<dbReference type="FunFam" id="3.30.590.10:FF:000011">
    <property type="entry name" value="Glutamine synthetase"/>
    <property type="match status" value="1"/>
</dbReference>
<dbReference type="Gene3D" id="3.10.20.70">
    <property type="entry name" value="Glutamine synthetase, N-terminal domain"/>
    <property type="match status" value="1"/>
</dbReference>
<dbReference type="Gene3D" id="3.30.590.10">
    <property type="entry name" value="Glutamine synthetase/guanido kinase, catalytic domain"/>
    <property type="match status" value="1"/>
</dbReference>
<dbReference type="InterPro" id="IPR008147">
    <property type="entry name" value="Gln_synt_N"/>
</dbReference>
<dbReference type="InterPro" id="IPR036651">
    <property type="entry name" value="Gln_synt_N_sf"/>
</dbReference>
<dbReference type="InterPro" id="IPR014746">
    <property type="entry name" value="Gln_synth/guanido_kin_cat_dom"/>
</dbReference>
<dbReference type="InterPro" id="IPR008146">
    <property type="entry name" value="Gln_synth_cat_dom"/>
</dbReference>
<dbReference type="InterPro" id="IPR027303">
    <property type="entry name" value="Gln_synth_gly_rich_site"/>
</dbReference>
<dbReference type="InterPro" id="IPR027302">
    <property type="entry name" value="Gln_synth_N_conserv_site"/>
</dbReference>
<dbReference type="InterPro" id="IPR050292">
    <property type="entry name" value="Glutamine_Synthetase"/>
</dbReference>
<dbReference type="PANTHER" id="PTHR20852">
    <property type="entry name" value="GLUTAMINE SYNTHETASE"/>
    <property type="match status" value="1"/>
</dbReference>
<dbReference type="PANTHER" id="PTHR20852:SF57">
    <property type="entry name" value="GLUTAMINE SYNTHETASE 2 CYTOPLASMIC"/>
    <property type="match status" value="1"/>
</dbReference>
<dbReference type="Pfam" id="PF00120">
    <property type="entry name" value="Gln-synt_C"/>
    <property type="match status" value="1"/>
</dbReference>
<dbReference type="Pfam" id="PF03951">
    <property type="entry name" value="Gln-synt_N"/>
    <property type="match status" value="1"/>
</dbReference>
<dbReference type="SMART" id="SM01230">
    <property type="entry name" value="Gln-synt_C"/>
    <property type="match status" value="1"/>
</dbReference>
<dbReference type="SUPFAM" id="SSF54368">
    <property type="entry name" value="Glutamine synthetase, N-terminal domain"/>
    <property type="match status" value="1"/>
</dbReference>
<dbReference type="SUPFAM" id="SSF55931">
    <property type="entry name" value="Glutamine synthetase/guanido kinase"/>
    <property type="match status" value="1"/>
</dbReference>
<dbReference type="PROSITE" id="PS00180">
    <property type="entry name" value="GLNA_1"/>
    <property type="match status" value="1"/>
</dbReference>
<dbReference type="PROSITE" id="PS00181">
    <property type="entry name" value="GLNA_ATP"/>
    <property type="match status" value="1"/>
</dbReference>
<dbReference type="PROSITE" id="PS51986">
    <property type="entry name" value="GS_BETA_GRASP"/>
    <property type="match status" value="1"/>
</dbReference>
<dbReference type="PROSITE" id="PS51987">
    <property type="entry name" value="GS_CATALYTIC"/>
    <property type="match status" value="1"/>
</dbReference>